<name>RNPA_BACC3</name>
<proteinExistence type="inferred from homology"/>
<comment type="function">
    <text evidence="1">RNaseP catalyzes the removal of the 5'-leader sequence from pre-tRNA to produce the mature 5'-terminus. It can also cleave other RNA substrates such as 4.5S RNA. The protein component plays an auxiliary but essential role in vivo by binding to the 5'-leader sequence and broadening the substrate specificity of the ribozyme.</text>
</comment>
<comment type="catalytic activity">
    <reaction evidence="1">
        <text>Endonucleolytic cleavage of RNA, removing 5'-extranucleotides from tRNA precursor.</text>
        <dbReference type="EC" id="3.1.26.5"/>
    </reaction>
</comment>
<comment type="subunit">
    <text evidence="1">Consists of a catalytic RNA component (M1 or rnpB) and a protein subunit.</text>
</comment>
<comment type="similarity">
    <text evidence="1">Belongs to the RnpA family.</text>
</comment>
<dbReference type="EC" id="3.1.26.5" evidence="1"/>
<dbReference type="EMBL" id="CP001407">
    <property type="protein sequence ID" value="ACO26340.1"/>
    <property type="molecule type" value="Genomic_DNA"/>
</dbReference>
<dbReference type="RefSeq" id="WP_000726626.1">
    <property type="nucleotide sequence ID" value="NZ_CP009318.1"/>
</dbReference>
<dbReference type="SMR" id="C1ER80"/>
<dbReference type="KEGG" id="bcx:BCA_5642"/>
<dbReference type="PATRIC" id="fig|572264.18.peg.64"/>
<dbReference type="Proteomes" id="UP000002210">
    <property type="component" value="Chromosome"/>
</dbReference>
<dbReference type="GO" id="GO:0030677">
    <property type="term" value="C:ribonuclease P complex"/>
    <property type="evidence" value="ECO:0007669"/>
    <property type="project" value="TreeGrafter"/>
</dbReference>
<dbReference type="GO" id="GO:0042781">
    <property type="term" value="F:3'-tRNA processing endoribonuclease activity"/>
    <property type="evidence" value="ECO:0007669"/>
    <property type="project" value="TreeGrafter"/>
</dbReference>
<dbReference type="GO" id="GO:0004526">
    <property type="term" value="F:ribonuclease P activity"/>
    <property type="evidence" value="ECO:0007669"/>
    <property type="project" value="UniProtKB-UniRule"/>
</dbReference>
<dbReference type="GO" id="GO:0000049">
    <property type="term" value="F:tRNA binding"/>
    <property type="evidence" value="ECO:0007669"/>
    <property type="project" value="UniProtKB-UniRule"/>
</dbReference>
<dbReference type="GO" id="GO:0001682">
    <property type="term" value="P:tRNA 5'-leader removal"/>
    <property type="evidence" value="ECO:0007669"/>
    <property type="project" value="UniProtKB-UniRule"/>
</dbReference>
<dbReference type="FunFam" id="3.30.230.10:FF:000021">
    <property type="entry name" value="Ribonuclease P protein component"/>
    <property type="match status" value="1"/>
</dbReference>
<dbReference type="Gene3D" id="3.30.230.10">
    <property type="match status" value="1"/>
</dbReference>
<dbReference type="HAMAP" id="MF_00227">
    <property type="entry name" value="RNase_P"/>
    <property type="match status" value="1"/>
</dbReference>
<dbReference type="InterPro" id="IPR020568">
    <property type="entry name" value="Ribosomal_Su5_D2-typ_SF"/>
</dbReference>
<dbReference type="InterPro" id="IPR014721">
    <property type="entry name" value="Ribsml_uS5_D2-typ_fold_subgr"/>
</dbReference>
<dbReference type="InterPro" id="IPR000100">
    <property type="entry name" value="RNase_P"/>
</dbReference>
<dbReference type="InterPro" id="IPR020539">
    <property type="entry name" value="RNase_P_CS"/>
</dbReference>
<dbReference type="NCBIfam" id="TIGR00188">
    <property type="entry name" value="rnpA"/>
    <property type="match status" value="1"/>
</dbReference>
<dbReference type="PANTHER" id="PTHR33992">
    <property type="entry name" value="RIBONUCLEASE P PROTEIN COMPONENT"/>
    <property type="match status" value="1"/>
</dbReference>
<dbReference type="PANTHER" id="PTHR33992:SF1">
    <property type="entry name" value="RIBONUCLEASE P PROTEIN COMPONENT"/>
    <property type="match status" value="1"/>
</dbReference>
<dbReference type="Pfam" id="PF00825">
    <property type="entry name" value="Ribonuclease_P"/>
    <property type="match status" value="1"/>
</dbReference>
<dbReference type="SUPFAM" id="SSF54211">
    <property type="entry name" value="Ribosomal protein S5 domain 2-like"/>
    <property type="match status" value="1"/>
</dbReference>
<dbReference type="PROSITE" id="PS00648">
    <property type="entry name" value="RIBONUCLEASE_P"/>
    <property type="match status" value="1"/>
</dbReference>
<feature type="chain" id="PRO_1000194602" description="Ribonuclease P protein component">
    <location>
        <begin position="1"/>
        <end position="115"/>
    </location>
</feature>
<evidence type="ECO:0000255" key="1">
    <source>
        <dbReference type="HAMAP-Rule" id="MF_00227"/>
    </source>
</evidence>
<organism>
    <name type="scientific">Bacillus cereus (strain 03BB102)</name>
    <dbReference type="NCBI Taxonomy" id="572264"/>
    <lineage>
        <taxon>Bacteria</taxon>
        <taxon>Bacillati</taxon>
        <taxon>Bacillota</taxon>
        <taxon>Bacilli</taxon>
        <taxon>Bacillales</taxon>
        <taxon>Bacillaceae</taxon>
        <taxon>Bacillus</taxon>
        <taxon>Bacillus cereus group</taxon>
    </lineage>
</organism>
<sequence>MKKKHRIKKNDEFQTVFQKGKSNANRQFVVYQLDKAEQPYFRIGLSVSKKIGNAVVRNRIKRMIRQSITELKDEIDSGKDFVIIARKPCAEMTYEEVKKSLIHVFKRSGMKRIKK</sequence>
<protein>
    <recommendedName>
        <fullName evidence="1">Ribonuclease P protein component</fullName>
        <shortName evidence="1">RNase P protein</shortName>
        <shortName evidence="1">RNaseP protein</shortName>
        <ecNumber evidence="1">3.1.26.5</ecNumber>
    </recommendedName>
    <alternativeName>
        <fullName evidence="1">Protein C5</fullName>
    </alternativeName>
</protein>
<keyword id="KW-0255">Endonuclease</keyword>
<keyword id="KW-0378">Hydrolase</keyword>
<keyword id="KW-0540">Nuclease</keyword>
<keyword id="KW-0694">RNA-binding</keyword>
<keyword id="KW-0819">tRNA processing</keyword>
<gene>
    <name evidence="1" type="primary">rnpA</name>
    <name type="ordered locus">BCA_5642</name>
</gene>
<accession>C1ER80</accession>
<reference key="1">
    <citation type="submission" date="2009-02" db="EMBL/GenBank/DDBJ databases">
        <title>Genome sequence of Bacillus cereus 03BB102.</title>
        <authorList>
            <person name="Dodson R.J."/>
            <person name="Jackson P."/>
            <person name="Munk A.C."/>
            <person name="Brettin T."/>
            <person name="Bruce D."/>
            <person name="Detter C."/>
            <person name="Tapia R."/>
            <person name="Han C."/>
            <person name="Sutton G."/>
            <person name="Sims D."/>
        </authorList>
    </citation>
    <scope>NUCLEOTIDE SEQUENCE [LARGE SCALE GENOMIC DNA]</scope>
    <source>
        <strain>03BB102</strain>
    </source>
</reference>